<sequence>MPPFISHFFLLSTFASLALCSFYCKNPGYPCLNGGTCLYNGECNCTSGFRGFNCGLDSSTISAACTVECHNKGICYNGDKCYCTKDYMGPTCQQAYDFADCNKSSMKIKAYRPTEFNGEMFLMQSMFGCKLAEVTSTIAGYKQYELDVPHDSTGPCKLKKTIDATTGDVHFEVNVSTIHHAGQFGMYDGLKTVSCHYSSRDQAIVKDVTNQDLIVSVTASDGSTPNLQEIPSNDVIHLTFKPVNLPGGYKAVKILDLEMYSVVEQWNEINSMVLLKDQCMTQKADELGYSVSNEVDGTSGRAILKAIPLFENVPAPVHFNYRLRFCRNRCILKSCASPSLKPMPKGEIFKHQGQGIRIV</sequence>
<name>ELDP2_PINMG</name>
<proteinExistence type="evidence at protein level"/>
<evidence type="ECO:0000250" key="1">
    <source>
        <dbReference type="UniProtKB" id="P86954"/>
    </source>
</evidence>
<evidence type="ECO:0000255" key="2"/>
<evidence type="ECO:0000255" key="3">
    <source>
        <dbReference type="PROSITE-ProRule" id="PRU00076"/>
    </source>
</evidence>
<evidence type="ECO:0000269" key="4">
    <source>
    </source>
</evidence>
<evidence type="ECO:0000305" key="5"/>
<protein>
    <recommendedName>
        <fullName evidence="1">EGF-like domain containing protein 2</fullName>
    </recommendedName>
</protein>
<feature type="signal peptide" evidence="2">
    <location>
        <begin position="1"/>
        <end position="20"/>
    </location>
</feature>
<feature type="chain" id="PRO_0000417947" description="EGF-like domain containing protein 2" evidence="2">
    <location>
        <begin position="21"/>
        <end position="359"/>
    </location>
</feature>
<feature type="domain" description="EGF-like 1" evidence="3">
    <location>
        <begin position="21"/>
        <end position="55"/>
    </location>
</feature>
<feature type="domain" description="EGF-like 2" evidence="3">
    <location>
        <begin position="61"/>
        <end position="93"/>
    </location>
</feature>
<feature type="disulfide bond" evidence="3">
    <location>
        <begin position="24"/>
        <end position="37"/>
    </location>
</feature>
<feature type="disulfide bond" evidence="3">
    <location>
        <begin position="31"/>
        <end position="43"/>
    </location>
</feature>
<feature type="disulfide bond" evidence="3">
    <location>
        <begin position="45"/>
        <end position="54"/>
    </location>
</feature>
<feature type="disulfide bond" evidence="3">
    <location>
        <begin position="65"/>
        <end position="75"/>
    </location>
</feature>
<feature type="disulfide bond" evidence="3">
    <location>
        <begin position="69"/>
        <end position="81"/>
    </location>
</feature>
<feature type="disulfide bond" evidence="3">
    <location>
        <begin position="83"/>
        <end position="92"/>
    </location>
</feature>
<reference evidence="5" key="1">
    <citation type="journal article" date="2010" name="BMC Genomics">
        <title>Transcriptome and proteome analysis of Pinctada margaritifera calcifying mantle and shell: focus on biomineralization.</title>
        <authorList>
            <person name="Joubert C."/>
            <person name="Piquemal D."/>
            <person name="Marie B."/>
            <person name="Manchon L."/>
            <person name="Pierrat F."/>
            <person name="Zanella-Cleon I."/>
            <person name="Cochennec-Laureau N."/>
            <person name="Gueguen Y."/>
            <person name="Montagnani C."/>
        </authorList>
    </citation>
    <scope>NUCLEOTIDE SEQUENCE [MRNA]</scope>
    <scope>IDENTIFICATION</scope>
    <source>
        <tissue>Mantle</tissue>
    </source>
</reference>
<reference key="2">
    <citation type="journal article" date="2012" name="Proc. Natl. Acad. Sci. U.S.A.">
        <title>Different secretory repertoires control the biomineralization processes of prism and nacre deposition of the pearl oyster shell.</title>
        <authorList>
            <person name="Marie B."/>
            <person name="Joubert C."/>
            <person name="Tayale A."/>
            <person name="Zanella-Cleon I."/>
            <person name="Belliard C."/>
            <person name="Piquemal D."/>
            <person name="Cochennec-Laureau N."/>
            <person name="Marin F."/>
            <person name="Gueguen Y."/>
            <person name="Montagnani C."/>
        </authorList>
    </citation>
    <scope>PROTEIN SEQUENCE OF 51-72; 131-157; 306-322 AND 334-344</scope>
    <scope>SUBCELLULAR LOCATION</scope>
    <scope>TISSUE SPECIFICITY</scope>
    <source>
        <tissue>Shell</tissue>
    </source>
</reference>
<organism>
    <name type="scientific">Margaritifera margaritifera</name>
    <name type="common">Freshwater pearl mussel</name>
    <dbReference type="NCBI Taxonomy" id="102329"/>
    <lineage>
        <taxon>Eukaryota</taxon>
        <taxon>Metazoa</taxon>
        <taxon>Spiralia</taxon>
        <taxon>Lophotrochozoa</taxon>
        <taxon>Mollusca</taxon>
        <taxon>Bivalvia</taxon>
        <taxon>Autobranchia</taxon>
        <taxon>Pteriomorphia</taxon>
        <taxon>Pterioida</taxon>
        <taxon>Pterioidea</taxon>
        <taxon>Pteriidae</taxon>
        <taxon>Pinctada</taxon>
    </lineage>
</organism>
<keyword id="KW-0903">Direct protein sequencing</keyword>
<keyword id="KW-1015">Disulfide bond</keyword>
<keyword id="KW-0245">EGF-like domain</keyword>
<keyword id="KW-0677">Repeat</keyword>
<keyword id="KW-0964">Secreted</keyword>
<keyword id="KW-0732">Signal</keyword>
<dbReference type="EMBL" id="HE610380">
    <property type="protein sequence ID" value="CCE46154.1"/>
    <property type="molecule type" value="mRNA"/>
</dbReference>
<dbReference type="GO" id="GO:0005576">
    <property type="term" value="C:extracellular region"/>
    <property type="evidence" value="ECO:0007669"/>
    <property type="project" value="UniProtKB-SubCell"/>
</dbReference>
<dbReference type="CDD" id="cd00054">
    <property type="entry name" value="EGF_CA"/>
    <property type="match status" value="1"/>
</dbReference>
<dbReference type="Gene3D" id="2.10.25.10">
    <property type="entry name" value="Laminin"/>
    <property type="match status" value="1"/>
</dbReference>
<dbReference type="InterPro" id="IPR050969">
    <property type="entry name" value="Dev_Signal_Modulators"/>
</dbReference>
<dbReference type="InterPro" id="IPR000742">
    <property type="entry name" value="EGF-like_dom"/>
</dbReference>
<dbReference type="PANTHER" id="PTHR14949:SF56">
    <property type="entry name" value="EGF-LIKE-DOMAIN, MULTIPLE 7"/>
    <property type="match status" value="1"/>
</dbReference>
<dbReference type="PANTHER" id="PTHR14949">
    <property type="entry name" value="EGF-LIKE-DOMAIN, MULTIPLE 7, 8"/>
    <property type="match status" value="1"/>
</dbReference>
<dbReference type="SMART" id="SM00181">
    <property type="entry name" value="EGF"/>
    <property type="match status" value="2"/>
</dbReference>
<dbReference type="PROSITE" id="PS00022">
    <property type="entry name" value="EGF_1"/>
    <property type="match status" value="2"/>
</dbReference>
<dbReference type="PROSITE" id="PS01186">
    <property type="entry name" value="EGF_2"/>
    <property type="match status" value="1"/>
</dbReference>
<dbReference type="PROSITE" id="PS50026">
    <property type="entry name" value="EGF_3"/>
    <property type="match status" value="2"/>
</dbReference>
<accession>H2A0L3</accession>
<comment type="subcellular location">
    <subcellularLocation>
        <location evidence="4">Secreted</location>
    </subcellularLocation>
</comment>
<comment type="tissue specificity">
    <text evidence="4">Prismatic layer of shell (at protein level). Expressed primarily in the mantle with highest level in the mantle edge and lower level in the mantle pallium.</text>
</comment>